<evidence type="ECO:0000250" key="1"/>
<evidence type="ECO:0000256" key="2">
    <source>
        <dbReference type="SAM" id="MobiDB-lite"/>
    </source>
</evidence>
<evidence type="ECO:0000269" key="3">
    <source>
    </source>
</evidence>
<evidence type="ECO:0000305" key="4"/>
<dbReference type="EMBL" id="AB009080">
    <property type="protein sequence ID" value="BAA33143.1"/>
    <property type="molecule type" value="Genomic_DNA"/>
</dbReference>
<dbReference type="EMBL" id="AAFI02000005">
    <property type="protein sequence ID" value="EAL71947.1"/>
    <property type="molecule type" value="Genomic_DNA"/>
</dbReference>
<dbReference type="PIR" id="T14004">
    <property type="entry name" value="T14004"/>
</dbReference>
<dbReference type="RefSeq" id="XP_646078.1">
    <property type="nucleotide sequence ID" value="XM_640986.1"/>
</dbReference>
<dbReference type="SMR" id="O77033"/>
<dbReference type="FunCoup" id="O77033">
    <property type="interactions" value="141"/>
</dbReference>
<dbReference type="STRING" id="44689.O77033"/>
<dbReference type="GlyGen" id="O77033">
    <property type="glycosylation" value="1 site"/>
</dbReference>
<dbReference type="PaxDb" id="44689-DDB0191270"/>
<dbReference type="EnsemblProtists" id="EAL71947">
    <property type="protein sequence ID" value="EAL71947"/>
    <property type="gene ID" value="DDB_G0269194"/>
</dbReference>
<dbReference type="GeneID" id="8617028"/>
<dbReference type="KEGG" id="ddi:DDB_G0269194"/>
<dbReference type="dictyBase" id="DDB_G0269194">
    <property type="gene designation" value="trfA"/>
</dbReference>
<dbReference type="VEuPathDB" id="AmoebaDB:DDB_G0269194"/>
<dbReference type="eggNOG" id="KOG1124">
    <property type="taxonomic scope" value="Eukaryota"/>
</dbReference>
<dbReference type="HOGENOM" id="CLU_255023_0_0_1"/>
<dbReference type="InParanoid" id="O77033"/>
<dbReference type="OMA" id="NKHIQSR"/>
<dbReference type="Reactome" id="R-DDI-2559580">
    <property type="pathway name" value="Oxidative Stress Induced Senescence"/>
</dbReference>
<dbReference type="Reactome" id="R-DDI-3214842">
    <property type="pathway name" value="HDMs demethylate histones"/>
</dbReference>
<dbReference type="PRO" id="PR:O77033"/>
<dbReference type="Proteomes" id="UP000002195">
    <property type="component" value="Chromosome 1"/>
</dbReference>
<dbReference type="GO" id="GO:0005634">
    <property type="term" value="C:nucleus"/>
    <property type="evidence" value="ECO:0007669"/>
    <property type="project" value="UniProtKB-SubCell"/>
</dbReference>
<dbReference type="GO" id="GO:0031490">
    <property type="term" value="F:chromatin DNA binding"/>
    <property type="evidence" value="ECO:0000318"/>
    <property type="project" value="GO_Central"/>
</dbReference>
<dbReference type="GO" id="GO:0000978">
    <property type="term" value="F:RNA polymerase II cis-regulatory region sequence-specific DNA binding"/>
    <property type="evidence" value="ECO:0000318"/>
    <property type="project" value="GO_Central"/>
</dbReference>
<dbReference type="GO" id="GO:0010468">
    <property type="term" value="P:regulation of gene expression"/>
    <property type="evidence" value="ECO:0000318"/>
    <property type="project" value="GO_Central"/>
</dbReference>
<dbReference type="GO" id="GO:0030587">
    <property type="term" value="P:sorocarp development"/>
    <property type="evidence" value="ECO:0000315"/>
    <property type="project" value="dictyBase"/>
</dbReference>
<dbReference type="FunFam" id="1.25.40.10:FF:000403">
    <property type="entry name" value="General transcriptional repressor, putative"/>
    <property type="match status" value="1"/>
</dbReference>
<dbReference type="FunFam" id="1.25.40.10:FF:000078">
    <property type="entry name" value="Transcriptional corepressor Cyc8"/>
    <property type="match status" value="1"/>
</dbReference>
<dbReference type="Gene3D" id="1.25.40.10">
    <property type="entry name" value="Tetratricopeptide repeat domain"/>
    <property type="match status" value="3"/>
</dbReference>
<dbReference type="InterPro" id="IPR051630">
    <property type="entry name" value="Corepressor-Demethylase"/>
</dbReference>
<dbReference type="InterPro" id="IPR011990">
    <property type="entry name" value="TPR-like_helical_dom_sf"/>
</dbReference>
<dbReference type="InterPro" id="IPR013105">
    <property type="entry name" value="TPR_2"/>
</dbReference>
<dbReference type="InterPro" id="IPR019734">
    <property type="entry name" value="TPR_rpt"/>
</dbReference>
<dbReference type="PANTHER" id="PTHR14017:SF1">
    <property type="entry name" value="LD02225P"/>
    <property type="match status" value="1"/>
</dbReference>
<dbReference type="PANTHER" id="PTHR14017">
    <property type="entry name" value="LYSINE-SPECIFIC DEMETHYLASE"/>
    <property type="match status" value="1"/>
</dbReference>
<dbReference type="Pfam" id="PF00515">
    <property type="entry name" value="TPR_1"/>
    <property type="match status" value="1"/>
</dbReference>
<dbReference type="Pfam" id="PF13432">
    <property type="entry name" value="TPR_16"/>
    <property type="match status" value="1"/>
</dbReference>
<dbReference type="Pfam" id="PF14559">
    <property type="entry name" value="TPR_19"/>
    <property type="match status" value="1"/>
</dbReference>
<dbReference type="Pfam" id="PF07719">
    <property type="entry name" value="TPR_2"/>
    <property type="match status" value="1"/>
</dbReference>
<dbReference type="Pfam" id="PF13181">
    <property type="entry name" value="TPR_8"/>
    <property type="match status" value="2"/>
</dbReference>
<dbReference type="SMART" id="SM00028">
    <property type="entry name" value="TPR"/>
    <property type="match status" value="9"/>
</dbReference>
<dbReference type="SUPFAM" id="SSF48452">
    <property type="entry name" value="TPR-like"/>
    <property type="match status" value="2"/>
</dbReference>
<dbReference type="PROSITE" id="PS50005">
    <property type="entry name" value="TPR"/>
    <property type="match status" value="9"/>
</dbReference>
<dbReference type="PROSITE" id="PS50293">
    <property type="entry name" value="TPR_REGION"/>
    <property type="match status" value="1"/>
</dbReference>
<feature type="chain" id="PRO_0000327392" description="General transcriptional corepressor trfA">
    <location>
        <begin position="1"/>
        <end position="1390"/>
    </location>
</feature>
<feature type="repeat" description="TPR 1">
    <location>
        <begin position="171"/>
        <end position="204"/>
    </location>
</feature>
<feature type="repeat" description="TPR 2">
    <location>
        <begin position="206"/>
        <end position="238"/>
    </location>
</feature>
<feature type="repeat" description="TPR 3">
    <location>
        <begin position="239"/>
        <end position="272"/>
    </location>
</feature>
<feature type="repeat" description="TPR 4">
    <location>
        <begin position="275"/>
        <end position="308"/>
    </location>
</feature>
<feature type="repeat" description="TPR 5">
    <location>
        <begin position="312"/>
        <end position="345"/>
    </location>
</feature>
<feature type="repeat" description="TPR 6">
    <location>
        <begin position="349"/>
        <end position="382"/>
    </location>
</feature>
<feature type="repeat" description="TPR 7">
    <location>
        <begin position="384"/>
        <end position="419"/>
    </location>
</feature>
<feature type="repeat" description="TPR 8">
    <location>
        <begin position="420"/>
        <end position="453"/>
    </location>
</feature>
<feature type="repeat" description="TPR 9">
    <location>
        <begin position="454"/>
        <end position="487"/>
    </location>
</feature>
<feature type="repeat" description="TPR 10">
    <location>
        <begin position="489"/>
        <end position="521"/>
    </location>
</feature>
<feature type="region of interest" description="Disordered" evidence="2">
    <location>
        <begin position="53"/>
        <end position="143"/>
    </location>
</feature>
<feature type="region of interest" description="Disordered" evidence="2">
    <location>
        <begin position="539"/>
        <end position="596"/>
    </location>
</feature>
<feature type="region of interest" description="Disordered" evidence="2">
    <location>
        <begin position="632"/>
        <end position="938"/>
    </location>
</feature>
<feature type="region of interest" description="Disordered" evidence="2">
    <location>
        <begin position="958"/>
        <end position="1390"/>
    </location>
</feature>
<feature type="compositionally biased region" description="Basic and acidic residues" evidence="2">
    <location>
        <begin position="540"/>
        <end position="557"/>
    </location>
</feature>
<feature type="compositionally biased region" description="Low complexity" evidence="2">
    <location>
        <begin position="582"/>
        <end position="593"/>
    </location>
</feature>
<feature type="compositionally biased region" description="Basic and acidic residues" evidence="2">
    <location>
        <begin position="632"/>
        <end position="641"/>
    </location>
</feature>
<feature type="compositionally biased region" description="Low complexity" evidence="2">
    <location>
        <begin position="644"/>
        <end position="744"/>
    </location>
</feature>
<feature type="compositionally biased region" description="Basic and acidic residues" evidence="2">
    <location>
        <begin position="745"/>
        <end position="803"/>
    </location>
</feature>
<feature type="compositionally biased region" description="Low complexity" evidence="2">
    <location>
        <begin position="805"/>
        <end position="846"/>
    </location>
</feature>
<feature type="compositionally biased region" description="Basic and acidic residues" evidence="2">
    <location>
        <begin position="857"/>
        <end position="871"/>
    </location>
</feature>
<feature type="compositionally biased region" description="Low complexity" evidence="2">
    <location>
        <begin position="872"/>
        <end position="898"/>
    </location>
</feature>
<feature type="compositionally biased region" description="Low complexity" evidence="2">
    <location>
        <begin position="917"/>
        <end position="937"/>
    </location>
</feature>
<feature type="compositionally biased region" description="Basic and acidic residues" evidence="2">
    <location>
        <begin position="977"/>
        <end position="993"/>
    </location>
</feature>
<feature type="compositionally biased region" description="Basic and acidic residues" evidence="2">
    <location>
        <begin position="1000"/>
        <end position="1029"/>
    </location>
</feature>
<feature type="compositionally biased region" description="Basic and acidic residues" evidence="2">
    <location>
        <begin position="1037"/>
        <end position="1099"/>
    </location>
</feature>
<feature type="compositionally biased region" description="Basic and acidic residues" evidence="2">
    <location>
        <begin position="1120"/>
        <end position="1135"/>
    </location>
</feature>
<feature type="compositionally biased region" description="Polar residues" evidence="2">
    <location>
        <begin position="1136"/>
        <end position="1146"/>
    </location>
</feature>
<feature type="compositionally biased region" description="Basic and acidic residues" evidence="2">
    <location>
        <begin position="1147"/>
        <end position="1169"/>
    </location>
</feature>
<feature type="compositionally biased region" description="Low complexity" evidence="2">
    <location>
        <begin position="1170"/>
        <end position="1180"/>
    </location>
</feature>
<feature type="compositionally biased region" description="Low complexity" evidence="2">
    <location>
        <begin position="1192"/>
        <end position="1203"/>
    </location>
</feature>
<feature type="compositionally biased region" description="Basic and acidic residues" evidence="2">
    <location>
        <begin position="1206"/>
        <end position="1218"/>
    </location>
</feature>
<feature type="compositionally biased region" description="Low complexity" evidence="2">
    <location>
        <begin position="1219"/>
        <end position="1228"/>
    </location>
</feature>
<feature type="compositionally biased region" description="Polar residues" evidence="2">
    <location>
        <begin position="1229"/>
        <end position="1239"/>
    </location>
</feature>
<feature type="compositionally biased region" description="Basic and acidic residues" evidence="2">
    <location>
        <begin position="1240"/>
        <end position="1263"/>
    </location>
</feature>
<feature type="compositionally biased region" description="Low complexity" evidence="2">
    <location>
        <begin position="1277"/>
        <end position="1289"/>
    </location>
</feature>
<feature type="compositionally biased region" description="Low complexity" evidence="2">
    <location>
        <begin position="1315"/>
        <end position="1337"/>
    </location>
</feature>
<feature type="compositionally biased region" description="Basic and acidic residues" evidence="2">
    <location>
        <begin position="1339"/>
        <end position="1374"/>
    </location>
</feature>
<gene>
    <name type="primary">trfA</name>
    <name type="ORF">DDB_G0269194</name>
</gene>
<reference key="1">
    <citation type="journal article" date="1998" name="J. Biol. Chem.">
        <title>Dictyostelium TRFA homologous to yeast Ssn6 is required for normal growth and early development.</title>
        <authorList>
            <person name="Saito J."/>
            <person name="Kon T."/>
            <person name="Nagasaki A."/>
            <person name="Adachi H."/>
            <person name="Sutoh K."/>
        </authorList>
    </citation>
    <scope>NUCLEOTIDE SEQUENCE [GENOMIC DNA / MRNA]</scope>
    <scope>INDUCTION</scope>
    <source>
        <strain>AX2</strain>
    </source>
</reference>
<reference key="2">
    <citation type="journal article" date="2005" name="Nature">
        <title>The genome of the social amoeba Dictyostelium discoideum.</title>
        <authorList>
            <person name="Eichinger L."/>
            <person name="Pachebat J.A."/>
            <person name="Gloeckner G."/>
            <person name="Rajandream M.A."/>
            <person name="Sucgang R."/>
            <person name="Berriman M."/>
            <person name="Song J."/>
            <person name="Olsen R."/>
            <person name="Szafranski K."/>
            <person name="Xu Q."/>
            <person name="Tunggal B."/>
            <person name="Kummerfeld S."/>
            <person name="Madera M."/>
            <person name="Konfortov B.A."/>
            <person name="Rivero F."/>
            <person name="Bankier A.T."/>
            <person name="Lehmann R."/>
            <person name="Hamlin N."/>
            <person name="Davies R."/>
            <person name="Gaudet P."/>
            <person name="Fey P."/>
            <person name="Pilcher K."/>
            <person name="Chen G."/>
            <person name="Saunders D."/>
            <person name="Sodergren E.J."/>
            <person name="Davis P."/>
            <person name="Kerhornou A."/>
            <person name="Nie X."/>
            <person name="Hall N."/>
            <person name="Anjard C."/>
            <person name="Hemphill L."/>
            <person name="Bason N."/>
            <person name="Farbrother P."/>
            <person name="Desany B."/>
            <person name="Just E."/>
            <person name="Morio T."/>
            <person name="Rost R."/>
            <person name="Churcher C.M."/>
            <person name="Cooper J."/>
            <person name="Haydock S."/>
            <person name="van Driessche N."/>
            <person name="Cronin A."/>
            <person name="Goodhead I."/>
            <person name="Muzny D.M."/>
            <person name="Mourier T."/>
            <person name="Pain A."/>
            <person name="Lu M."/>
            <person name="Harper D."/>
            <person name="Lindsay R."/>
            <person name="Hauser H."/>
            <person name="James K.D."/>
            <person name="Quiles M."/>
            <person name="Madan Babu M."/>
            <person name="Saito T."/>
            <person name="Buchrieser C."/>
            <person name="Wardroper A."/>
            <person name="Felder M."/>
            <person name="Thangavelu M."/>
            <person name="Johnson D."/>
            <person name="Knights A."/>
            <person name="Loulseged H."/>
            <person name="Mungall K.L."/>
            <person name="Oliver K."/>
            <person name="Price C."/>
            <person name="Quail M.A."/>
            <person name="Urushihara H."/>
            <person name="Hernandez J."/>
            <person name="Rabbinowitsch E."/>
            <person name="Steffen D."/>
            <person name="Sanders M."/>
            <person name="Ma J."/>
            <person name="Kohara Y."/>
            <person name="Sharp S."/>
            <person name="Simmonds M.N."/>
            <person name="Spiegler S."/>
            <person name="Tivey A."/>
            <person name="Sugano S."/>
            <person name="White B."/>
            <person name="Walker D."/>
            <person name="Woodward J.R."/>
            <person name="Winckler T."/>
            <person name="Tanaka Y."/>
            <person name="Shaulsky G."/>
            <person name="Schleicher M."/>
            <person name="Weinstock G.M."/>
            <person name="Rosenthal A."/>
            <person name="Cox E.C."/>
            <person name="Chisholm R.L."/>
            <person name="Gibbs R.A."/>
            <person name="Loomis W.F."/>
            <person name="Platzer M."/>
            <person name="Kay R.R."/>
            <person name="Williams J.G."/>
            <person name="Dear P.H."/>
            <person name="Noegel A.A."/>
            <person name="Barrell B.G."/>
            <person name="Kuspa A."/>
        </authorList>
    </citation>
    <scope>NUCLEOTIDE SEQUENCE [LARGE SCALE GENOMIC DNA]</scope>
    <source>
        <strain>AX4</strain>
    </source>
</reference>
<organism>
    <name type="scientific">Dictyostelium discoideum</name>
    <name type="common">Social amoeba</name>
    <dbReference type="NCBI Taxonomy" id="44689"/>
    <lineage>
        <taxon>Eukaryota</taxon>
        <taxon>Amoebozoa</taxon>
        <taxon>Evosea</taxon>
        <taxon>Eumycetozoa</taxon>
        <taxon>Dictyostelia</taxon>
        <taxon>Dictyosteliales</taxon>
        <taxon>Dictyosteliaceae</taxon>
        <taxon>Dictyostelium</taxon>
    </lineage>
</organism>
<accession>O77033</accession>
<accession>Q55DQ3</accession>
<sequence>MNVQQTQQQQAMAAQQQSMVAQQQQQIAQQQSAIAQQQIAQQQQIAQQQQIAQQQQQHQQHQQHQQQHQQQQQHQQQHQQQQHIQQQQQPQQQQPQQQQSQQQQQQHQQQQQPQQQQPPQQQQQQPPQQQQQPQQQQQQQQQQQQQPQQQQQQQQQDQLSGVTGKIRDLNESIWIHLGGYAESIGEQDKALASYENALRHNPFSIKALTQIASLFRIKEQYSKAAEYFQRIVTIESKNGEVWGALGHCYLMMDDLQKAYTAYQQALYHLPNPKDPNLWYGIGILYDRYGSYDHAEEAFTAVLKMDNKFEKSTEIYFRLGVLYKHQGKYDQSLEYFQHLVKNPPLPLTTSDIWFQIGHVYELQKEYHKSKDAYEKVLKDNATHSKVLQQLGWLYHHNPLFTNQEYAINYLMRSIDSDSSDAQTWYLLGRCYMTQQKYKKAYDAYQQAVYRDGRNPTFWCSIGVLYYQINQYRDALDAYTRAIRLNPFLSEVWYDLGTLYESCHQHTDSLDAYQRAAELDPHNKHIQSRLATLRAQVSGKPIGKDGYDLQNGEHGEHGGKSTPMIIEPNSPGTGAMESLGKGGQNNRNGNNNGNNSFVPELAEINSHLPEDMRNNSSLPSSNELNSSLIDRKTERGRGEDMHNSHHSQYSNSMSMNNMNNNNNNMNMNNNMNNNMNNMNNNNNNMNSMNNMNNNNNNINNNMSNNNNNNHNNHQMNQYNNNNNNSNINNNNNNHHNMNDNVNSKNNDVLDRRYKGILEREKTSPNGDGRDNRDNIRDNRDNRDSRDGRDNRDGRDSRDRIQEYTREYNNNNNNNNSISSINNNNNNNNNNYNNNNNNNNNNNNNNNNNGLRATSPLPSHNDRRSYERDNKERINNNNNNNNNMNNNMNNNMNNMNNNNNNSNISRFEHQNNRTSSPFENNSNNNNNNNNNNNNNINYNNIGQRALSPQSSQHKDRREIILDEESDINERSKTRSPSIVKEAEEKRETVIVDKERSPTPIITEKPDEKQVEKVTDKESSLVEKVDKENEKESPSSSSSSKEIEKETEKEKEKEKEKEKEVEKEVEKEIENDKEKEKEKEVEKDVEENKSVEKSSEKPVEKESTTTTTNDEDEEGELSEPTTTTKKDDSSKLPTDEKKLSSVSPTTTAVEQSRDETKELEMDTKEDSEKEKKSSTTTTAAASESVKPIDEEKKSPTTTTTTTTNTTTVEPTHKDKESSKNDDTTTTTTTTTTKSAKSPNSSPTRSDEVVEPHQDASQEEINKRKLEDDITSTPSKRLKPDSTPSSATTASTPSEQPESPLKKENPVGETLSPEIKDSKSSSSSSSSSSSSTNTGSSSTNSSAKNERDRDRERERERERDREREREREREREREREKNKQPTRAPIKPSSRKLER</sequence>
<keyword id="KW-0539">Nucleus</keyword>
<keyword id="KW-1185">Reference proteome</keyword>
<keyword id="KW-0677">Repeat</keyword>
<keyword id="KW-0678">Repressor</keyword>
<keyword id="KW-0802">TPR repeat</keyword>
<keyword id="KW-0804">Transcription</keyword>
<keyword id="KW-0805">Transcription regulation</keyword>
<protein>
    <recommendedName>
        <fullName>General transcriptional corepressor trfA</fullName>
    </recommendedName>
</protein>
<name>CYC8_DICDI</name>
<comment type="function">
    <text evidence="1">Acts as a component of the trfA-tupA corepressor complex which is involved in the repression of many genes in a wide variety of physiological processes. May also be involved in the derepression of at least some target genes. The complex is recruited to target genes by interaction with DNA-bound transcriptional repressors. The complex recruits histone deacetylases to produce a repressive chromatin structure, interacts with hypoacetylated N-terminal tails of histones H3 and H4 that have been programmed for repression by the action of histone deacetylases and interferes directly with the transcriptional machinery by associating with the RNA polymerase II mediator complex (By similarity). Required for normal growth and for aggregation in early development. Required for a proper chemotactic response to cAMP.</text>
</comment>
<comment type="subunit">
    <text evidence="1">Associates with tupA to form the trfA-tupA corepressor complex.</text>
</comment>
<comment type="subcellular location">
    <subcellularLocation>
        <location evidence="1">Nucleus</location>
    </subcellularLocation>
</comment>
<comment type="induction">
    <text evidence="3">Expressed at the vegetative stage and at an early developmental stage, although at a lower level.</text>
</comment>
<comment type="similarity">
    <text evidence="4">Belongs to the CYC8/SSN6 family.</text>
</comment>
<proteinExistence type="evidence at transcript level"/>